<reference key="1">
    <citation type="journal article" date="2004" name="J. Bacteriol.">
        <title>Complete genome sequence of the genetically tractable hydrogenotrophic methanogen Methanococcus maripaludis.</title>
        <authorList>
            <person name="Hendrickson E.L."/>
            <person name="Kaul R."/>
            <person name="Zhou Y."/>
            <person name="Bovee D."/>
            <person name="Chapman P."/>
            <person name="Chung J."/>
            <person name="Conway de Macario E."/>
            <person name="Dodsworth J.A."/>
            <person name="Gillett W."/>
            <person name="Graham D.E."/>
            <person name="Hackett M."/>
            <person name="Haydock A.K."/>
            <person name="Kang A."/>
            <person name="Land M.L."/>
            <person name="Levy R."/>
            <person name="Lie T.J."/>
            <person name="Major T.A."/>
            <person name="Moore B.C."/>
            <person name="Porat I."/>
            <person name="Palmeiri A."/>
            <person name="Rouse G."/>
            <person name="Saenphimmachak C."/>
            <person name="Soell D."/>
            <person name="Van Dien S."/>
            <person name="Wang T."/>
            <person name="Whitman W.B."/>
            <person name="Xia Q."/>
            <person name="Zhang Y."/>
            <person name="Larimer F.W."/>
            <person name="Olson M.V."/>
            <person name="Leigh J.A."/>
        </authorList>
    </citation>
    <scope>NUCLEOTIDE SEQUENCE [LARGE SCALE GENOMIC DNA]</scope>
    <source>
        <strain>DSM 14266 / JCM 13030 / NBRC 101832 / S2 / LL</strain>
    </source>
</reference>
<keyword id="KW-0963">Cytoplasm</keyword>
<keyword id="KW-0648">Protein biosynthesis</keyword>
<keyword id="KW-1185">Reference proteome</keyword>
<gene>
    <name evidence="1" type="primary">prf1</name>
    <name type="ordered locus">MMP1131</name>
</gene>
<protein>
    <recommendedName>
        <fullName evidence="1">Peptide chain release factor subunit 1</fullName>
    </recommendedName>
    <alternativeName>
        <fullName evidence="1">Translation termination factor aRF1</fullName>
    </alternativeName>
</protein>
<accession>P61731</accession>
<organism>
    <name type="scientific">Methanococcus maripaludis (strain DSM 14266 / JCM 13030 / NBRC 101832 / S2 / LL)</name>
    <dbReference type="NCBI Taxonomy" id="267377"/>
    <lineage>
        <taxon>Archaea</taxon>
        <taxon>Methanobacteriati</taxon>
        <taxon>Methanobacteriota</taxon>
        <taxon>Methanomada group</taxon>
        <taxon>Methanococci</taxon>
        <taxon>Methanococcales</taxon>
        <taxon>Methanococcaceae</taxon>
        <taxon>Methanococcus</taxon>
    </lineage>
</organism>
<proteinExistence type="inferred from homology"/>
<feature type="chain" id="PRO_0000143177" description="Peptide chain release factor subunit 1">
    <location>
        <begin position="1"/>
        <end position="419"/>
    </location>
</feature>
<evidence type="ECO:0000255" key="1">
    <source>
        <dbReference type="HAMAP-Rule" id="MF_00424"/>
    </source>
</evidence>
<comment type="function">
    <text evidence="1">Directs the termination of nascent peptide synthesis (translation) in response to the termination codons UAA, UAG and UGA.</text>
</comment>
<comment type="subunit">
    <text evidence="1">Heterodimer of two subunits, one of which binds GTP.</text>
</comment>
<comment type="subcellular location">
    <subcellularLocation>
        <location evidence="1">Cytoplasm</location>
    </subcellularLocation>
</comment>
<comment type="similarity">
    <text evidence="1">Belongs to the eukaryotic release factor 1 family.</text>
</comment>
<dbReference type="EMBL" id="BX950229">
    <property type="protein sequence ID" value="CAF30687.1"/>
    <property type="molecule type" value="Genomic_DNA"/>
</dbReference>
<dbReference type="RefSeq" id="WP_011171075.1">
    <property type="nucleotide sequence ID" value="NC_005791.1"/>
</dbReference>
<dbReference type="SMR" id="P61731"/>
<dbReference type="STRING" id="267377.MMP1131"/>
<dbReference type="EnsemblBacteria" id="CAF30687">
    <property type="protein sequence ID" value="CAF30687"/>
    <property type="gene ID" value="MMP1131"/>
</dbReference>
<dbReference type="GeneID" id="41279716"/>
<dbReference type="KEGG" id="mmp:MMP1131"/>
<dbReference type="PATRIC" id="fig|267377.15.peg.1164"/>
<dbReference type="eggNOG" id="arCOG01742">
    <property type="taxonomic scope" value="Archaea"/>
</dbReference>
<dbReference type="HOGENOM" id="CLU_035759_3_0_2"/>
<dbReference type="OrthoDB" id="1011at2157"/>
<dbReference type="Proteomes" id="UP000000590">
    <property type="component" value="Chromosome"/>
</dbReference>
<dbReference type="GO" id="GO:0005737">
    <property type="term" value="C:cytoplasm"/>
    <property type="evidence" value="ECO:0007669"/>
    <property type="project" value="UniProtKB-SubCell"/>
</dbReference>
<dbReference type="GO" id="GO:0016149">
    <property type="term" value="F:translation release factor activity, codon specific"/>
    <property type="evidence" value="ECO:0007669"/>
    <property type="project" value="UniProtKB-UniRule"/>
</dbReference>
<dbReference type="FunFam" id="3.30.1330.30:FF:000032">
    <property type="entry name" value="Eukaryotic peptide chain release factor subunit 1"/>
    <property type="match status" value="1"/>
</dbReference>
<dbReference type="FunFam" id="3.30.420.60:FF:000003">
    <property type="entry name" value="Peptide chain release factor subunit 1"/>
    <property type="match status" value="1"/>
</dbReference>
<dbReference type="FunFam" id="3.30.960.10:FF:000003">
    <property type="entry name" value="Peptide chain release factor subunit 1"/>
    <property type="match status" value="1"/>
</dbReference>
<dbReference type="Gene3D" id="1.20.5.170">
    <property type="match status" value="1"/>
</dbReference>
<dbReference type="Gene3D" id="3.30.1330.30">
    <property type="match status" value="1"/>
</dbReference>
<dbReference type="Gene3D" id="3.30.960.10">
    <property type="entry name" value="eRF1 domain 1"/>
    <property type="match status" value="1"/>
</dbReference>
<dbReference type="Gene3D" id="3.30.420.60">
    <property type="entry name" value="eRF1 domain 2"/>
    <property type="match status" value="1"/>
</dbReference>
<dbReference type="HAMAP" id="MF_00424">
    <property type="entry name" value="Rel_fact_arch_1"/>
    <property type="match status" value="1"/>
</dbReference>
<dbReference type="InterPro" id="IPR042226">
    <property type="entry name" value="eFR1_2_sf"/>
</dbReference>
<dbReference type="InterPro" id="IPR005140">
    <property type="entry name" value="eRF1_1_Pelota"/>
</dbReference>
<dbReference type="InterPro" id="IPR024049">
    <property type="entry name" value="eRF1_1_sf"/>
</dbReference>
<dbReference type="InterPro" id="IPR005141">
    <property type="entry name" value="eRF1_2"/>
</dbReference>
<dbReference type="InterPro" id="IPR005142">
    <property type="entry name" value="eRF1_3"/>
</dbReference>
<dbReference type="InterPro" id="IPR020918">
    <property type="entry name" value="Peptide_chain-rel_aRF1"/>
</dbReference>
<dbReference type="InterPro" id="IPR004403">
    <property type="entry name" value="Peptide_chain-rel_eRF1/aRF1"/>
</dbReference>
<dbReference type="InterPro" id="IPR029064">
    <property type="entry name" value="Ribosomal_eL30-like_sf"/>
</dbReference>
<dbReference type="NCBIfam" id="TIGR03676">
    <property type="entry name" value="aRF1_eRF1"/>
    <property type="match status" value="1"/>
</dbReference>
<dbReference type="PANTHER" id="PTHR10113">
    <property type="entry name" value="PEPTIDE CHAIN RELEASE FACTOR SUBUNIT 1"/>
    <property type="match status" value="1"/>
</dbReference>
<dbReference type="Pfam" id="PF03463">
    <property type="entry name" value="eRF1_1"/>
    <property type="match status" value="1"/>
</dbReference>
<dbReference type="Pfam" id="PF03464">
    <property type="entry name" value="eRF1_2"/>
    <property type="match status" value="1"/>
</dbReference>
<dbReference type="Pfam" id="PF03465">
    <property type="entry name" value="eRF1_3"/>
    <property type="match status" value="1"/>
</dbReference>
<dbReference type="SMART" id="SM01194">
    <property type="entry name" value="eRF1_1"/>
    <property type="match status" value="1"/>
</dbReference>
<dbReference type="SUPFAM" id="SSF55315">
    <property type="entry name" value="L30e-like"/>
    <property type="match status" value="1"/>
</dbReference>
<dbReference type="SUPFAM" id="SSF55481">
    <property type="entry name" value="N-terminal domain of eukaryotic peptide chain release factor subunit 1, ERF1"/>
    <property type="match status" value="1"/>
</dbReference>
<dbReference type="SUPFAM" id="SSF53137">
    <property type="entry name" value="Translational machinery components"/>
    <property type="match status" value="1"/>
</dbReference>
<name>RF1_METMP</name>
<sequence>MSGNSSTDLYLFKKSLKELKGKKGKGTELISVYVPAGRRLSDISQYLRQELSQSSNIKSKTTMKNVQSAIEVILQRLKLLKEPLEMGVIIFAGMIPRGGPGTEKMEVYVLEPPEPVKTFVYRCDSLFYTDPLEDFIQDNEVYGVILVDRNEATIGTVRGKTITILKKLTSGVPGKFKAGGQSARRLERLIDDAAHQFMVRIGEYATESFMPILEEKKLKGLLLGGPGNTKNEFAEKDYLHHELKKKIIDTFDLCYTEEFGIRELLDKASDLLRDIDLMKEKNLIQRFFKELIKDDGGLSAYGEAQVMKYLEMGAIDTLIVTEDIGITRVTVKCNNCDITQEVNVKTNEMFKFEEQLKTKACPTCGGAMYIDEEKDIIEYLSDLCNMHNTDLIVVSTDTEEGSQISRAFKGMAAILRYKL</sequence>